<evidence type="ECO:0000250" key="1"/>
<evidence type="ECO:0000255" key="2"/>
<evidence type="ECO:0000269" key="3">
    <source>
    </source>
</evidence>
<evidence type="ECO:0000269" key="4">
    <source>
    </source>
</evidence>
<evidence type="ECO:0000269" key="5">
    <source>
    </source>
</evidence>
<evidence type="ECO:0000269" key="6">
    <source>
    </source>
</evidence>
<evidence type="ECO:0000269" key="7">
    <source>
    </source>
</evidence>
<evidence type="ECO:0000269" key="8">
    <source>
    </source>
</evidence>
<evidence type="ECO:0000269" key="9">
    <source>
    </source>
</evidence>
<evidence type="ECO:0000269" key="10">
    <source>
    </source>
</evidence>
<evidence type="ECO:0000269" key="11">
    <source>
    </source>
</evidence>
<evidence type="ECO:0000269" key="12">
    <source>
    </source>
</evidence>
<evidence type="ECO:0000269" key="13">
    <source>
    </source>
</evidence>
<evidence type="ECO:0000269" key="14">
    <source>
    </source>
</evidence>
<evidence type="ECO:0000269" key="15">
    <source>
    </source>
</evidence>
<evidence type="ECO:0000269" key="16">
    <source>
    </source>
</evidence>
<evidence type="ECO:0000303" key="17">
    <source>
    </source>
</evidence>
<evidence type="ECO:0000305" key="18"/>
<evidence type="ECO:0007829" key="19">
    <source>
        <dbReference type="PDB" id="5EAY"/>
    </source>
</evidence>
<comment type="function">
    <text evidence="3 4 5 6 8 9 10 11 15">Key enzyme involved in DNA replication and DNA repair in nucleus and mitochondrion. Involved in Okazaki fragments processing by cleaving long flaps that escape FEN1: flaps that are longer than 27 nucleotides are coated by replication protein A complex (RPA), leading to recruit DNA2 which cleaves the flap until it is too short to bind RPA and becomes a substrate for FEN1. Also involved in 5'-end resection of DNA during double-strand break (DSB) repair: recruited by BLM and mediates the cleavage of 5'-ssDNA, while the 3'-ssDNA cleavage is prevented by the presence of RPA. Also involved in DNA replication checkpoint independently of Okazaki fragments processing. Possesses different enzymatic activities, such as single-stranded DNA (ssDNA)-dependent ATPase, 5'-3' helicase and endonuclease activities. While the ATPase and endonuclease activities are well-defined and play a key role in Okazaki fragments processing and DSB repair, the 5'-3' DNA helicase activity is subject to debate. According to various reports, the helicase activity is weak and its function remains largely unclear. Helicase activity may promote the motion of DNA2 on the flap, helping the nuclease function.</text>
</comment>
<comment type="catalytic activity">
    <reaction evidence="4">
        <text>ATP + H2O = ADP + phosphate + H(+)</text>
        <dbReference type="Rhea" id="RHEA:13065"/>
        <dbReference type="ChEBI" id="CHEBI:15377"/>
        <dbReference type="ChEBI" id="CHEBI:15378"/>
        <dbReference type="ChEBI" id="CHEBI:30616"/>
        <dbReference type="ChEBI" id="CHEBI:43474"/>
        <dbReference type="ChEBI" id="CHEBI:456216"/>
        <dbReference type="EC" id="3.6.4.12"/>
    </reaction>
</comment>
<comment type="cofactor">
    <cofactor evidence="1">
        <name>[4Fe-4S] cluster</name>
        <dbReference type="ChEBI" id="CHEBI:49883"/>
    </cofactor>
    <text evidence="1">Binds 1 [4Fe-4S] cluster.</text>
</comment>
<comment type="subunit">
    <text evidence="8 11">Interacts with BLM and WDHD1.</text>
</comment>
<comment type="subcellular location">
    <subcellularLocation>
        <location>Nucleus</location>
    </subcellularLocation>
    <subcellularLocation>
        <location>Mitochondrion</location>
    </subcellularLocation>
    <text evidence="5 6">Was initially reported to be exclusively mitochondrial (PubMed:18995831). However, it was later shown to localize both in mitochondrion and nucleus (PubMed:19487465).</text>
</comment>
<comment type="alternative products">
    <event type="alternative splicing"/>
    <isoform>
        <id>P51530-1</id>
        <name>1</name>
        <sequence type="displayed"/>
    </isoform>
    <isoform>
        <id>P51530-2</id>
        <name>2</name>
        <sequence type="described" ref="VSP_021870 VSP_021871"/>
    </isoform>
    <isoform>
        <id>P51530-3</id>
        <name>3</name>
        <sequence type="described" ref="VSP_021869"/>
    </isoform>
    <isoform>
        <id>P51530-4</id>
        <name>4</name>
        <sequence type="described" ref="VSP_044185"/>
    </isoform>
</comment>
<comment type="PTM">
    <text evidence="7">Acetylated by EP300, leading to stimulate the 5'-3' endonuclease, the 5'-3' helicase and DNA-dependent ATPase activities, possibly by increasing DNA substrate affinity.</text>
</comment>
<comment type="disease" evidence="12 15">
    <disease id="DI-03758">
        <name>Progressive external ophthalmoplegia with mitochondrial DNA deletions, autosomal dominant, 6</name>
        <acronym>PEOA6</acronym>
        <description>A disorder characterized by muscle weakness, mainly affecting the lower limbs, external ophthalmoplegia, exercise intolerance, and mitochondrial DNA deletions on muscle biopsy. Symptoms may appear in childhood or adulthood and show slow progression.</description>
        <dbReference type="MIM" id="615156"/>
    </disease>
    <text>The disease is caused by variants affecting the gene represented in this entry.</text>
</comment>
<comment type="disease" evidence="13 14">
    <disease id="DI-04089">
        <name>Seckel syndrome 8</name>
        <acronym>SCKL8</acronym>
        <description>A rare autosomal recessive disorder characterized by proportionate dwarfism of prenatal onset associated with low birth weight, growth retardation, severe microcephaly with a bird-headed like appearance, and intellectual disability.</description>
        <dbReference type="MIM" id="615807"/>
    </disease>
    <text>The disease is caused by variants affecting the gene represented in this entry.</text>
</comment>
<comment type="disease" evidence="16">
    <disease id="DI-06901">
        <name>Rothmund-Thomson syndrome 4</name>
        <acronym>RTS4</acronym>
        <description>A form of Rothmund-Thomson syndrome, a disorder characterized by sparse hair, eyebrows and eyelashes, juvenile cataracts, and poikiloderma, a genodermatosis presenting with mottled pigmentation, telangiectasia and epidermal atrophy. Additional features are short stature, dysplastic nails, and skeletal and dental abnormalities. Inheritance is autosomal recessive. RTS4 patients also exhibit microcephaly and photosensitivity with bullae. Growth failure is severe, with some individuals showing signs of growth hormone or combined pituitary hormone deficiency.</description>
        <dbReference type="MIM" id="620819"/>
    </disease>
    <text>The disease is caused by variants affecting the gene represented in this entry.</text>
</comment>
<comment type="similarity">
    <text evidence="18">Belongs to the DNA2/NAM7 helicase family.</text>
</comment>
<comment type="sequence caution" evidence="18">
    <conflict type="erroneous initiation">
        <sequence resource="EMBL-CDS" id="AAH28188"/>
    </conflict>
    <text>Extended N-terminus.</text>
</comment>
<comment type="sequence caution" evidence="18">
    <conflict type="erroneous initiation">
        <sequence resource="EMBL-CDS" id="AAH63664"/>
    </conflict>
    <text>Extended N-terminus.</text>
</comment>
<comment type="sequence caution" evidence="18">
    <conflict type="erroneous initiation">
        <sequence resource="EMBL-CDS" id="BAA07647"/>
    </conflict>
    <text>Extended N-terminus.</text>
</comment>
<sequence length="1060" mass="120415">MEQLNELELLMEKSFWEEAELPAELFQKKVVASFPRTVLSTGMDNRYLVLAVNTVQNKEGNCEKRLVITASQSLENKELCILRNDWCSVPVEPGDIIHLEGDCTSDTWIIDKDFGYLILYPDMLISGTSIASSIRCMRRAVLSETFRSSDPATRQMLIGTVLHEVFQKAINNSFAPEKLQELAFQTIQEIRHLKEMYRLNLSQDEIKQEVEDYLPSFCKWAGDFMHKNTSTDFPQMQLSLPSDNSKDNSTCNIEVVKPMDIEESIWSPRFGLKGKIDVTVGVKIHRGYKTKYKIMPLELKTGKESNSIEHRSQVVLYTLLSQERRADPEAGLLLYLKTGQMYPVPANHLDKRELLKLRNQMAFSLFHRISKSATRQKTQLASLPQIIEEEKTCKYCSQIGNCALYSRAVEQQMDCSSVPIVMLPKIEEETQHLKQTHLEYFSLWCLMLTLESQSKDNKKNHQNIWLMPASEMEKSGSCIGNLIRMEHVKIVCDGQYLHNFQCKHGAIPVTNLMAGDRVIVSGEERSLFALSRGYVKEINMTTVTCLLDRNLSVLPESTLFRLDQEEKNCDIDTPLGNLSKLMENTFVSKKLRDLIIDFREPQFISYLSSVLPHDAKDTVACILKGLNKPQRQAMKKVLLSKDYTLIVGMPGTGKTTTICTLVRILYACGFSVLLTSYTHSAVDNILLKLAKFKIGFLRLGQIQKVHPAIQQFTEQEICRSKSIKSLALLEELYNSQLIVATTCMGINHPIFSRKIFDFCIVDEASQISQPICLGPLFFSRRFVLVGDHQQLPPLVLNREARALGMSESLFKRLEQNKSAVVQLTVQYRMNSKIMSLSNKLTYEGKLECGSDKVANAVINLRHFKDVKLELEFYADYSDNPWLMGVFEPNNPVCFLNTDKVPAPEQVEKGGVSNVTEAKLIVFLTSIFVKAGCSPSDIGIIAPYRQQLKIINDLLARSIGMVEVNTVDKYQGRDKSIVLVSFVRSNKDGTVGELLKDWRRLNVAITRAKHKLILLGCVPSLNCYPPLEKLLNHLNSEKLIIDLPSREHESLCHILGDFQRE</sequence>
<dbReference type="EC" id="3.1.-.-"/>
<dbReference type="EC" id="3.6.4.12"/>
<dbReference type="EMBL" id="D42046">
    <property type="protein sequence ID" value="BAA07647.1"/>
    <property type="status" value="ALT_INIT"/>
    <property type="molecule type" value="mRNA"/>
</dbReference>
<dbReference type="EMBL" id="AL136233">
    <property type="status" value="NOT_ANNOTATED_CDS"/>
    <property type="molecule type" value="Genomic_DNA"/>
</dbReference>
<dbReference type="EMBL" id="BC041115">
    <property type="protein sequence ID" value="AAH41115.1"/>
    <property type="molecule type" value="mRNA"/>
</dbReference>
<dbReference type="EMBL" id="BC053574">
    <property type="protein sequence ID" value="AAH53574.1"/>
    <property type="molecule type" value="mRNA"/>
</dbReference>
<dbReference type="EMBL" id="BC063664">
    <property type="protein sequence ID" value="AAH63664.1"/>
    <property type="status" value="ALT_INIT"/>
    <property type="molecule type" value="mRNA"/>
</dbReference>
<dbReference type="EMBL" id="BC111740">
    <property type="protein sequence ID" value="AAI11741.1"/>
    <property type="molecule type" value="mRNA"/>
</dbReference>
<dbReference type="EMBL" id="BC028188">
    <property type="protein sequence ID" value="AAH28188.1"/>
    <property type="status" value="ALT_INIT"/>
    <property type="molecule type" value="mRNA"/>
</dbReference>
<dbReference type="CCDS" id="CCDS44415.2">
    <molecule id="P51530-1"/>
</dbReference>
<dbReference type="PIR" id="T50697">
    <property type="entry name" value="T50697"/>
</dbReference>
<dbReference type="RefSeq" id="NP_001073918.2">
    <molecule id="P51530-1"/>
    <property type="nucleotide sequence ID" value="NM_001080449.3"/>
</dbReference>
<dbReference type="PDB" id="5EAY">
    <property type="method" value="X-ray"/>
    <property type="resolution" value="1.55 A"/>
    <property type="chains" value="E/F/G/H=5-17"/>
</dbReference>
<dbReference type="PDBsum" id="5EAY"/>
<dbReference type="SMR" id="P51530"/>
<dbReference type="BioGRID" id="108103">
    <property type="interactions" value="85"/>
</dbReference>
<dbReference type="FunCoup" id="P51530">
    <property type="interactions" value="2761"/>
</dbReference>
<dbReference type="IntAct" id="P51530">
    <property type="interactions" value="46"/>
</dbReference>
<dbReference type="STRING" id="9606.ENSP00000351185"/>
<dbReference type="ChEMBL" id="CHEMBL4523236"/>
<dbReference type="GlyGen" id="P51530">
    <property type="glycosylation" value="1 site, 1 N-linked glycan (1 site)"/>
</dbReference>
<dbReference type="iPTMnet" id="P51530"/>
<dbReference type="PhosphoSitePlus" id="P51530"/>
<dbReference type="BioMuta" id="DNA2"/>
<dbReference type="jPOST" id="P51530"/>
<dbReference type="MassIVE" id="P51530"/>
<dbReference type="PaxDb" id="9606-ENSP00000351185"/>
<dbReference type="PeptideAtlas" id="P51530"/>
<dbReference type="ProteomicsDB" id="56322">
    <molecule id="P51530-1"/>
</dbReference>
<dbReference type="ProteomicsDB" id="56323">
    <molecule id="P51530-2"/>
</dbReference>
<dbReference type="ProteomicsDB" id="56324">
    <molecule id="P51530-3"/>
</dbReference>
<dbReference type="Pumba" id="P51530"/>
<dbReference type="Antibodypedia" id="28503">
    <property type="antibodies" value="145 antibodies from 26 providers"/>
</dbReference>
<dbReference type="DNASU" id="1763"/>
<dbReference type="Ensembl" id="ENST00000358410.8">
    <molecule id="P51530-1"/>
    <property type="protein sequence ID" value="ENSP00000351185.3"/>
    <property type="gene ID" value="ENSG00000138346.16"/>
</dbReference>
<dbReference type="Ensembl" id="ENST00000399179.6">
    <molecule id="P51530-2"/>
    <property type="protein sequence ID" value="ENSP00000382132.3"/>
    <property type="gene ID" value="ENSG00000138346.16"/>
</dbReference>
<dbReference type="GeneID" id="1763"/>
<dbReference type="KEGG" id="hsa:1763"/>
<dbReference type="MANE-Select" id="ENST00000358410.8">
    <property type="protein sequence ID" value="ENSP00000351185.3"/>
    <property type="RefSeq nucleotide sequence ID" value="NM_001080449.3"/>
    <property type="RefSeq protein sequence ID" value="NP_001073918.2"/>
</dbReference>
<dbReference type="UCSC" id="uc057tqx.1">
    <molecule id="P51530-1"/>
    <property type="organism name" value="human"/>
</dbReference>
<dbReference type="AGR" id="HGNC:2939"/>
<dbReference type="CTD" id="1763"/>
<dbReference type="DisGeNET" id="1763"/>
<dbReference type="GeneCards" id="DNA2"/>
<dbReference type="HGNC" id="HGNC:2939">
    <property type="gene designation" value="DNA2"/>
</dbReference>
<dbReference type="HPA" id="ENSG00000138346">
    <property type="expression patterns" value="Tissue enhanced (lymphoid)"/>
</dbReference>
<dbReference type="MalaCards" id="DNA2"/>
<dbReference type="MIM" id="601810">
    <property type="type" value="gene"/>
</dbReference>
<dbReference type="MIM" id="615156">
    <property type="type" value="phenotype"/>
</dbReference>
<dbReference type="MIM" id="615807">
    <property type="type" value="phenotype"/>
</dbReference>
<dbReference type="MIM" id="620819">
    <property type="type" value="phenotype"/>
</dbReference>
<dbReference type="neXtProt" id="NX_P51530"/>
<dbReference type="OpenTargets" id="ENSG00000138346"/>
<dbReference type="Orphanet" id="352470">
    <property type="disease" value="DNA2-related mitochondrial DNA deletion syndrome"/>
</dbReference>
<dbReference type="Orphanet" id="808">
    <property type="disease" value="Seckel syndrome"/>
</dbReference>
<dbReference type="VEuPathDB" id="HostDB:ENSG00000138346"/>
<dbReference type="eggNOG" id="KOG1805">
    <property type="taxonomic scope" value="Eukaryota"/>
</dbReference>
<dbReference type="GeneTree" id="ENSGT00780000122010"/>
<dbReference type="HOGENOM" id="CLU_001666_2_0_1"/>
<dbReference type="InParanoid" id="P51530"/>
<dbReference type="OMA" id="NYCEAAI"/>
<dbReference type="OrthoDB" id="306218at2759"/>
<dbReference type="PAN-GO" id="P51530">
    <property type="GO annotations" value="4 GO annotations based on evolutionary models"/>
</dbReference>
<dbReference type="PhylomeDB" id="P51530"/>
<dbReference type="PathwayCommons" id="P51530"/>
<dbReference type="Reactome" id="R-HSA-174437">
    <property type="pathway name" value="Removal of the Flap Intermediate from the C-strand"/>
</dbReference>
<dbReference type="Reactome" id="R-HSA-5685938">
    <property type="pathway name" value="HDR through Single Strand Annealing (SSA)"/>
</dbReference>
<dbReference type="Reactome" id="R-HSA-5685942">
    <property type="pathway name" value="HDR through Homologous Recombination (HRR)"/>
</dbReference>
<dbReference type="Reactome" id="R-HSA-5693554">
    <property type="pathway name" value="Resolution of D-loop Structures through Synthesis-Dependent Strand Annealing (SDSA)"/>
</dbReference>
<dbReference type="Reactome" id="R-HSA-5693568">
    <property type="pathway name" value="Resolution of D-loop Structures through Holliday Junction Intermediates"/>
</dbReference>
<dbReference type="Reactome" id="R-HSA-5693579">
    <property type="pathway name" value="Homologous DNA Pairing and Strand Exchange"/>
</dbReference>
<dbReference type="Reactome" id="R-HSA-5693607">
    <property type="pathway name" value="Processing of DNA double-strand break ends"/>
</dbReference>
<dbReference type="Reactome" id="R-HSA-5693616">
    <property type="pathway name" value="Presynaptic phase of homologous DNA pairing and strand exchange"/>
</dbReference>
<dbReference type="Reactome" id="R-HSA-6804756">
    <property type="pathway name" value="Regulation of TP53 Activity through Phosphorylation"/>
</dbReference>
<dbReference type="Reactome" id="R-HSA-69166">
    <property type="pathway name" value="Removal of the Flap Intermediate"/>
</dbReference>
<dbReference type="Reactome" id="R-HSA-69473">
    <property type="pathway name" value="G2/M DNA damage checkpoint"/>
</dbReference>
<dbReference type="Reactome" id="R-HSA-9701192">
    <property type="pathway name" value="Defective homologous recombination repair (HRR) due to BRCA1 loss of function"/>
</dbReference>
<dbReference type="Reactome" id="R-HSA-9704331">
    <property type="pathway name" value="Defective HDR through Homologous Recombination Repair (HRR) due to PALB2 loss of BRCA1 binding function"/>
</dbReference>
<dbReference type="Reactome" id="R-HSA-9704646">
    <property type="pathway name" value="Defective HDR through Homologous Recombination Repair (HRR) due to PALB2 loss of BRCA2/RAD51/RAD51C binding function"/>
</dbReference>
<dbReference type="Reactome" id="R-HSA-9709570">
    <property type="pathway name" value="Impaired BRCA2 binding to RAD51"/>
</dbReference>
<dbReference type="Reactome" id="R-HSA-9709603">
    <property type="pathway name" value="Impaired BRCA2 binding to PALB2"/>
</dbReference>
<dbReference type="SignaLink" id="P51530"/>
<dbReference type="BioGRID-ORCS" id="1763">
    <property type="hits" value="67 hits in 295 CRISPR screens"/>
</dbReference>
<dbReference type="ChiTaRS" id="DNA2">
    <property type="organism name" value="human"/>
</dbReference>
<dbReference type="EvolutionaryTrace" id="P51530"/>
<dbReference type="GeneWiki" id="DNA2L"/>
<dbReference type="GenomeRNAi" id="1763"/>
<dbReference type="Pharos" id="P51530">
    <property type="development level" value="Tbio"/>
</dbReference>
<dbReference type="PRO" id="PR:P51530"/>
<dbReference type="Proteomes" id="UP000005640">
    <property type="component" value="Chromosome 10"/>
</dbReference>
<dbReference type="RNAct" id="P51530">
    <property type="molecule type" value="protein"/>
</dbReference>
<dbReference type="Bgee" id="ENSG00000138346">
    <property type="expression patterns" value="Expressed in secondary oocyte and 116 other cell types or tissues"/>
</dbReference>
<dbReference type="ExpressionAtlas" id="P51530">
    <property type="expression patterns" value="baseline and differential"/>
</dbReference>
<dbReference type="GO" id="GO:0000781">
    <property type="term" value="C:chromosome, telomeric region"/>
    <property type="evidence" value="ECO:0000250"/>
    <property type="project" value="BHF-UCL"/>
</dbReference>
<dbReference type="GO" id="GO:0005737">
    <property type="term" value="C:cytoplasm"/>
    <property type="evidence" value="ECO:0000318"/>
    <property type="project" value="GO_Central"/>
</dbReference>
<dbReference type="GO" id="GO:0042645">
    <property type="term" value="C:mitochondrial nucleoid"/>
    <property type="evidence" value="ECO:0000314"/>
    <property type="project" value="UniProtKB"/>
</dbReference>
<dbReference type="GO" id="GO:0005739">
    <property type="term" value="C:mitochondrion"/>
    <property type="evidence" value="ECO:0000314"/>
    <property type="project" value="HPA"/>
</dbReference>
<dbReference type="GO" id="GO:0005654">
    <property type="term" value="C:nucleoplasm"/>
    <property type="evidence" value="ECO:0000314"/>
    <property type="project" value="HPA"/>
</dbReference>
<dbReference type="GO" id="GO:0005634">
    <property type="term" value="C:nucleus"/>
    <property type="evidence" value="ECO:0000314"/>
    <property type="project" value="UniProtKB"/>
</dbReference>
<dbReference type="GO" id="GO:0051539">
    <property type="term" value="F:4 iron, 4 sulfur cluster binding"/>
    <property type="evidence" value="ECO:0007669"/>
    <property type="project" value="UniProtKB-KW"/>
</dbReference>
<dbReference type="GO" id="GO:0043139">
    <property type="term" value="F:5'-3' DNA helicase activity"/>
    <property type="evidence" value="ECO:0000314"/>
    <property type="project" value="UniProtKB"/>
</dbReference>
<dbReference type="GO" id="GO:0017108">
    <property type="term" value="F:5'-flap endonuclease activity"/>
    <property type="evidence" value="ECO:0000314"/>
    <property type="project" value="UniProtKB"/>
</dbReference>
<dbReference type="GO" id="GO:0005524">
    <property type="term" value="F:ATP binding"/>
    <property type="evidence" value="ECO:0007669"/>
    <property type="project" value="UniProtKB-KW"/>
</dbReference>
<dbReference type="GO" id="GO:0016887">
    <property type="term" value="F:ATP hydrolysis activity"/>
    <property type="evidence" value="ECO:0000315"/>
    <property type="project" value="UniProtKB"/>
</dbReference>
<dbReference type="GO" id="GO:0003677">
    <property type="term" value="F:DNA binding"/>
    <property type="evidence" value="ECO:0000314"/>
    <property type="project" value="UniProtKB"/>
</dbReference>
<dbReference type="GO" id="GO:0003678">
    <property type="term" value="F:DNA helicase activity"/>
    <property type="evidence" value="ECO:0000314"/>
    <property type="project" value="UniProtKB"/>
</dbReference>
<dbReference type="GO" id="GO:0004386">
    <property type="term" value="F:helicase activity"/>
    <property type="evidence" value="ECO:0000304"/>
    <property type="project" value="UniProtKB"/>
</dbReference>
<dbReference type="GO" id="GO:0046872">
    <property type="term" value="F:metal ion binding"/>
    <property type="evidence" value="ECO:0007669"/>
    <property type="project" value="UniProtKB-KW"/>
</dbReference>
<dbReference type="GO" id="GO:0004518">
    <property type="term" value="F:nuclease activity"/>
    <property type="evidence" value="ECO:0000314"/>
    <property type="project" value="UniProtKB"/>
</dbReference>
<dbReference type="GO" id="GO:0003723">
    <property type="term" value="F:RNA binding"/>
    <property type="evidence" value="ECO:0000318"/>
    <property type="project" value="GO_Central"/>
</dbReference>
<dbReference type="GO" id="GO:0017116">
    <property type="term" value="F:single-stranded DNA helicase activity"/>
    <property type="evidence" value="ECO:0000314"/>
    <property type="project" value="UniProtKB"/>
</dbReference>
<dbReference type="GO" id="GO:0016890">
    <property type="term" value="F:site-specific endodeoxyribonuclease activity, specific for altered base"/>
    <property type="evidence" value="ECO:0000314"/>
    <property type="project" value="UniProtKB"/>
</dbReference>
<dbReference type="GO" id="GO:0006284">
    <property type="term" value="P:base-excision repair"/>
    <property type="evidence" value="ECO:0000314"/>
    <property type="project" value="UniProtKB"/>
</dbReference>
<dbReference type="GO" id="GO:0000729">
    <property type="term" value="P:DNA double-strand break processing"/>
    <property type="evidence" value="ECO:0000314"/>
    <property type="project" value="UniProtKB"/>
</dbReference>
<dbReference type="GO" id="GO:0032392">
    <property type="term" value="P:DNA geometric change"/>
    <property type="evidence" value="ECO:0000304"/>
    <property type="project" value="BHF-UCL"/>
</dbReference>
<dbReference type="GO" id="GO:0006260">
    <property type="term" value="P:DNA replication"/>
    <property type="evidence" value="ECO:0000315"/>
    <property type="project" value="UniProtKB"/>
</dbReference>
<dbReference type="GO" id="GO:0000076">
    <property type="term" value="P:DNA replication checkpoint signaling"/>
    <property type="evidence" value="ECO:0000315"/>
    <property type="project" value="UniProtKB"/>
</dbReference>
<dbReference type="GO" id="GO:0033567">
    <property type="term" value="P:DNA replication, Okazaki fragment processing"/>
    <property type="evidence" value="ECO:0000314"/>
    <property type="project" value="UniProtKB"/>
</dbReference>
<dbReference type="GO" id="GO:0043137">
    <property type="term" value="P:DNA replication, removal of RNA primer"/>
    <property type="evidence" value="ECO:0000314"/>
    <property type="project" value="UniProtKB"/>
</dbReference>
<dbReference type="GO" id="GO:0043504">
    <property type="term" value="P:mitochondrial DNA repair"/>
    <property type="evidence" value="ECO:0000314"/>
    <property type="project" value="UniProtKB"/>
</dbReference>
<dbReference type="GO" id="GO:0006264">
    <property type="term" value="P:mitochondrial DNA replication"/>
    <property type="evidence" value="ECO:0000314"/>
    <property type="project" value="UniProtKB"/>
</dbReference>
<dbReference type="GO" id="GO:1902990">
    <property type="term" value="P:mitotic telomere maintenance via semi-conservative replication"/>
    <property type="evidence" value="ECO:0000250"/>
    <property type="project" value="BHF-UCL"/>
</dbReference>
<dbReference type="GO" id="GO:0045740">
    <property type="term" value="P:positive regulation of DNA replication"/>
    <property type="evidence" value="ECO:0000314"/>
    <property type="project" value="UniProtKB"/>
</dbReference>
<dbReference type="GO" id="GO:0071932">
    <property type="term" value="P:replication fork reversal"/>
    <property type="evidence" value="ECO:0000318"/>
    <property type="project" value="GO_Central"/>
</dbReference>
<dbReference type="GO" id="GO:0090656">
    <property type="term" value="P:t-circle formation"/>
    <property type="evidence" value="ECO:0000304"/>
    <property type="project" value="BHF-UCL"/>
</dbReference>
<dbReference type="GO" id="GO:0000723">
    <property type="term" value="P:telomere maintenance"/>
    <property type="evidence" value="ECO:0000250"/>
    <property type="project" value="BHF-UCL"/>
</dbReference>
<dbReference type="GO" id="GO:0032201">
    <property type="term" value="P:telomere maintenance via semi-conservative replication"/>
    <property type="evidence" value="ECO:0000304"/>
    <property type="project" value="Reactome"/>
</dbReference>
<dbReference type="CDD" id="cd18041">
    <property type="entry name" value="DEXXQc_DNA2"/>
    <property type="match status" value="1"/>
</dbReference>
<dbReference type="CDD" id="cd22318">
    <property type="entry name" value="DNA2_N-like"/>
    <property type="match status" value="1"/>
</dbReference>
<dbReference type="CDD" id="cd18808">
    <property type="entry name" value="SF1_C_Upf1"/>
    <property type="match status" value="1"/>
</dbReference>
<dbReference type="FunFam" id="2.40.30.270:FF:000002">
    <property type="entry name" value="DNA replication ATP-dependent helicase/nuclease DNA2"/>
    <property type="match status" value="1"/>
</dbReference>
<dbReference type="FunFam" id="3.40.50.300:FF:000721">
    <property type="entry name" value="DNA replication ATP-dependent helicase/nuclease DNA2"/>
    <property type="match status" value="1"/>
</dbReference>
<dbReference type="FunFam" id="3.40.50.300:FF:000789">
    <property type="entry name" value="DNA replication ATP-dependent helicase/nuclease DNA2"/>
    <property type="match status" value="1"/>
</dbReference>
<dbReference type="FunFam" id="3.40.50.300:FF:000915">
    <property type="entry name" value="DNA replication ATP-dependent helicase/nuclease DNA2"/>
    <property type="match status" value="1"/>
</dbReference>
<dbReference type="Gene3D" id="3.90.320.10">
    <property type="match status" value="1"/>
</dbReference>
<dbReference type="Gene3D" id="3.40.50.300">
    <property type="entry name" value="P-loop containing nucleotide triphosphate hydrolases"/>
    <property type="match status" value="2"/>
</dbReference>
<dbReference type="InterPro" id="IPR051827">
    <property type="entry name" value="Cas4_exonuclease"/>
</dbReference>
<dbReference type="InterPro" id="IPR026851">
    <property type="entry name" value="Dna2/JHS1_DEXXQ-box"/>
</dbReference>
<dbReference type="InterPro" id="IPR041679">
    <property type="entry name" value="DNA2/NAM7-like_C"/>
</dbReference>
<dbReference type="InterPro" id="IPR041677">
    <property type="entry name" value="DNA2/NAM7_AAA_11"/>
</dbReference>
<dbReference type="InterPro" id="IPR048459">
    <property type="entry name" value="DNA2_Rift"/>
</dbReference>
<dbReference type="InterPro" id="IPR014808">
    <property type="entry name" value="DNA_replication_fac_Dna2_N"/>
</dbReference>
<dbReference type="InterPro" id="IPR027417">
    <property type="entry name" value="P-loop_NTPase"/>
</dbReference>
<dbReference type="InterPro" id="IPR011604">
    <property type="entry name" value="PDDEXK-like_dom_sf"/>
</dbReference>
<dbReference type="InterPro" id="IPR047187">
    <property type="entry name" value="SF1_C_Upf1"/>
</dbReference>
<dbReference type="PANTHER" id="PTHR36531">
    <property type="entry name" value="CRISPR-ASSOCIATED EXONUCLEASE CAS4"/>
    <property type="match status" value="1"/>
</dbReference>
<dbReference type="PANTHER" id="PTHR36531:SF6">
    <property type="entry name" value="DNA REPLICATION ATP-DEPENDENT HELICASE_NUCLEASE DNA2"/>
    <property type="match status" value="1"/>
</dbReference>
<dbReference type="Pfam" id="PF13086">
    <property type="entry name" value="AAA_11"/>
    <property type="match status" value="2"/>
</dbReference>
<dbReference type="Pfam" id="PF13087">
    <property type="entry name" value="AAA_12"/>
    <property type="match status" value="1"/>
</dbReference>
<dbReference type="Pfam" id="PF08696">
    <property type="entry name" value="Dna2"/>
    <property type="match status" value="1"/>
</dbReference>
<dbReference type="Pfam" id="PF21123">
    <property type="entry name" value="Dna2_Rift"/>
    <property type="match status" value="1"/>
</dbReference>
<dbReference type="SUPFAM" id="SSF52540">
    <property type="entry name" value="P-loop containing nucleoside triphosphate hydrolases"/>
    <property type="match status" value="1"/>
</dbReference>
<gene>
    <name type="primary">DNA2</name>
    <name type="synonym">DNA2L</name>
    <name type="synonym">KIAA0083</name>
</gene>
<name>DNA2_HUMAN</name>
<proteinExistence type="evidence at protein level"/>
<accession>P51530</accession>
<accession>Q2NKM1</accession>
<accession>Q5TC49</accession>
<accession>Q5TC50</accession>
<accession>Q6P455</accession>
<accession>Q6PI80</accession>
<accession>Q7Z6H9</accession>
<accession>Q8N346</accession>
<reference key="1">
    <citation type="journal article" date="1995" name="DNA Res.">
        <title>Prediction of the coding sequences of unidentified human genes. III. The coding sequences of 40 new genes (KIAA0081-KIAA0120) deduced by analysis of cDNA clones from human cell line KG-1.</title>
        <authorList>
            <person name="Nagase T."/>
            <person name="Miyajima N."/>
            <person name="Tanaka A."/>
            <person name="Sazuka T."/>
            <person name="Seki N."/>
            <person name="Sato S."/>
            <person name="Tabata S."/>
            <person name="Ishikawa K."/>
            <person name="Kawarabayasi Y."/>
            <person name="Kotani H."/>
            <person name="Nomura N."/>
        </authorList>
    </citation>
    <scope>NUCLEOTIDE SEQUENCE [LARGE SCALE MRNA] (ISOFORM 1)</scope>
    <source>
        <tissue>Bone marrow</tissue>
    </source>
</reference>
<reference key="2">
    <citation type="journal article" date="2004" name="Nature">
        <title>The DNA sequence and comparative analysis of human chromosome 10.</title>
        <authorList>
            <person name="Deloukas P."/>
            <person name="Earthrowl M.E."/>
            <person name="Grafham D.V."/>
            <person name="Rubenfield M."/>
            <person name="French L."/>
            <person name="Steward C.A."/>
            <person name="Sims S.K."/>
            <person name="Jones M.C."/>
            <person name="Searle S."/>
            <person name="Scott C."/>
            <person name="Howe K."/>
            <person name="Hunt S.E."/>
            <person name="Andrews T.D."/>
            <person name="Gilbert J.G.R."/>
            <person name="Swarbreck D."/>
            <person name="Ashurst J.L."/>
            <person name="Taylor A."/>
            <person name="Battles J."/>
            <person name="Bird C.P."/>
            <person name="Ainscough R."/>
            <person name="Almeida J.P."/>
            <person name="Ashwell R.I.S."/>
            <person name="Ambrose K.D."/>
            <person name="Babbage A.K."/>
            <person name="Bagguley C.L."/>
            <person name="Bailey J."/>
            <person name="Banerjee R."/>
            <person name="Bates K."/>
            <person name="Beasley H."/>
            <person name="Bray-Allen S."/>
            <person name="Brown A.J."/>
            <person name="Brown J.Y."/>
            <person name="Burford D.C."/>
            <person name="Burrill W."/>
            <person name="Burton J."/>
            <person name="Cahill P."/>
            <person name="Camire D."/>
            <person name="Carter N.P."/>
            <person name="Chapman J.C."/>
            <person name="Clark S.Y."/>
            <person name="Clarke G."/>
            <person name="Clee C.M."/>
            <person name="Clegg S."/>
            <person name="Corby N."/>
            <person name="Coulson A."/>
            <person name="Dhami P."/>
            <person name="Dutta I."/>
            <person name="Dunn M."/>
            <person name="Faulkner L."/>
            <person name="Frankish A."/>
            <person name="Frankland J.A."/>
            <person name="Garner P."/>
            <person name="Garnett J."/>
            <person name="Gribble S."/>
            <person name="Griffiths C."/>
            <person name="Grocock R."/>
            <person name="Gustafson E."/>
            <person name="Hammond S."/>
            <person name="Harley J.L."/>
            <person name="Hart E."/>
            <person name="Heath P.D."/>
            <person name="Ho T.P."/>
            <person name="Hopkins B."/>
            <person name="Horne J."/>
            <person name="Howden P.J."/>
            <person name="Huckle E."/>
            <person name="Hynds C."/>
            <person name="Johnson C."/>
            <person name="Johnson D."/>
            <person name="Kana A."/>
            <person name="Kay M."/>
            <person name="Kimberley A.M."/>
            <person name="Kershaw J.K."/>
            <person name="Kokkinaki M."/>
            <person name="Laird G.K."/>
            <person name="Lawlor S."/>
            <person name="Lee H.M."/>
            <person name="Leongamornlert D.A."/>
            <person name="Laird G."/>
            <person name="Lloyd C."/>
            <person name="Lloyd D.M."/>
            <person name="Loveland J."/>
            <person name="Lovell J."/>
            <person name="McLaren S."/>
            <person name="McLay K.E."/>
            <person name="McMurray A."/>
            <person name="Mashreghi-Mohammadi M."/>
            <person name="Matthews L."/>
            <person name="Milne S."/>
            <person name="Nickerson T."/>
            <person name="Nguyen M."/>
            <person name="Overton-Larty E."/>
            <person name="Palmer S.A."/>
            <person name="Pearce A.V."/>
            <person name="Peck A.I."/>
            <person name="Pelan S."/>
            <person name="Phillimore B."/>
            <person name="Porter K."/>
            <person name="Rice C.M."/>
            <person name="Rogosin A."/>
            <person name="Ross M.T."/>
            <person name="Sarafidou T."/>
            <person name="Sehra H.K."/>
            <person name="Shownkeen R."/>
            <person name="Skuce C.D."/>
            <person name="Smith M."/>
            <person name="Standring L."/>
            <person name="Sycamore N."/>
            <person name="Tester J."/>
            <person name="Thorpe A."/>
            <person name="Torcasso W."/>
            <person name="Tracey A."/>
            <person name="Tromans A."/>
            <person name="Tsolas J."/>
            <person name="Wall M."/>
            <person name="Walsh J."/>
            <person name="Wang H."/>
            <person name="Weinstock K."/>
            <person name="West A.P."/>
            <person name="Willey D.L."/>
            <person name="Whitehead S.L."/>
            <person name="Wilming L."/>
            <person name="Wray P.W."/>
            <person name="Young L."/>
            <person name="Chen Y."/>
            <person name="Lovering R.C."/>
            <person name="Moschonas N.K."/>
            <person name="Siebert R."/>
            <person name="Fechtel K."/>
            <person name="Bentley D."/>
            <person name="Durbin R.M."/>
            <person name="Hubbard T."/>
            <person name="Doucette-Stamm L."/>
            <person name="Beck S."/>
            <person name="Smith D.R."/>
            <person name="Rogers J."/>
        </authorList>
    </citation>
    <scope>NUCLEOTIDE SEQUENCE [LARGE SCALE GENOMIC DNA]</scope>
</reference>
<reference key="3">
    <citation type="journal article" date="2004" name="Genome Res.">
        <title>The status, quality, and expansion of the NIH full-length cDNA project: the Mammalian Gene Collection (MGC).</title>
        <authorList>
            <consortium name="The MGC Project Team"/>
        </authorList>
    </citation>
    <scope>NUCLEOTIDE SEQUENCE [LARGE SCALE MRNA] (ISOFORMS 2 AND 3)</scope>
    <scope>NUCLEOTIDE SEQUENCE [LARGE SCALE MRNA] OF 680-1060 (ISOFORM 4)</scope>
    <scope>NUCLEOTIDE SEQUENCE [LARGE SCALE MRNA] OF 567-1060 (ISOFORM 1)</scope>
    <source>
        <tissue>Colon</tissue>
        <tissue>Duodenum</tissue>
        <tissue>Lymph</tissue>
    </source>
</reference>
<reference key="4">
    <citation type="journal article" date="2006" name="Nucleic Acids Res.">
        <title>Isolation of human Dna2 endonuclease and characterization of its enzymatic properties.</title>
        <authorList>
            <person name="Kim J.H."/>
            <person name="Kim H.D."/>
            <person name="Ryu G.H."/>
            <person name="Kim D.H."/>
            <person name="Hurwitz J."/>
            <person name="Seo Y.S."/>
        </authorList>
    </citation>
    <scope>FUNCTION</scope>
</reference>
<reference key="5">
    <citation type="journal article" date="2006" name="Nucleic Acids Res.">
        <title>Biochemical analysis of human Dna2.</title>
        <authorList>
            <person name="Masuda-Sasa T."/>
            <person name="Imamura O."/>
            <person name="Campbell J.L."/>
        </authorList>
    </citation>
    <scope>FUNCTION</scope>
    <scope>CATALYTIC ACTIVITY</scope>
    <scope>MUTAGENESIS OF ASP-277 AND LYS-654</scope>
</reference>
<reference key="6">
    <citation type="journal article" date="2008" name="Mol. Cell">
        <title>Human DNA2 is a mitochondrial nuclease/helicase for efficient processing of DNA replication and repair intermediates.</title>
        <authorList>
            <person name="Zheng L."/>
            <person name="Zhou M."/>
            <person name="Guo Z."/>
            <person name="Lu H."/>
            <person name="Qian L."/>
            <person name="Dai H."/>
            <person name="Qiu J."/>
            <person name="Yakubovskaya E."/>
            <person name="Bogenhagen D.F."/>
            <person name="Demple B."/>
            <person name="Shen B."/>
        </authorList>
    </citation>
    <scope>FUNCTION</scope>
    <scope>SUBCELLULAR LOCATION</scope>
</reference>
<reference key="7">
    <citation type="journal article" date="2009" name="Mol. Cell. Biol.">
        <title>Human Dna2 is a nuclear and mitochondrial DNA maintenance protein.</title>
        <authorList>
            <person name="Duxin J.P."/>
            <person name="Dao B."/>
            <person name="Martinsson P."/>
            <person name="Rajala N."/>
            <person name="Guittat L."/>
            <person name="Campbell J.L."/>
            <person name="Spelbrink J.N."/>
            <person name="Stewart S.A."/>
        </authorList>
    </citation>
    <scope>FUNCTION</scope>
    <scope>SUBCELLULAR LOCATION</scope>
</reference>
<reference key="8">
    <citation type="journal article" date="2010" name="J. Biol. Chem.">
        <title>Acetylation of Dna2 endonuclease/helicase and flap endonuclease 1 by p300 promotes DNA stability by creating long flap intermediates.</title>
        <authorList>
            <person name="Balakrishnan L."/>
            <person name="Stewart J."/>
            <person name="Polaczek P."/>
            <person name="Campbell J.L."/>
            <person name="Bambara R.A."/>
        </authorList>
    </citation>
    <scope>ACETYLATION</scope>
</reference>
<reference key="9">
    <citation type="journal article" date="2011" name="Genes Dev.">
        <title>BLM-DNA2-RPA-MRN and EXO1-BLM-RPA-MRN constitute two DNA end resection machineries for human DNA break repair.</title>
        <authorList>
            <person name="Nimonkar A.V."/>
            <person name="Genschel J."/>
            <person name="Kinoshita E."/>
            <person name="Polaczek P."/>
            <person name="Campbell J.L."/>
            <person name="Wyman C."/>
            <person name="Modrich P."/>
            <person name="Kowalczykowski S.C."/>
        </authorList>
    </citation>
    <scope>FUNCTION</scope>
    <scope>INTERACTION WITH BLM</scope>
    <scope>MUTAGENESIS OF ASP-277 AND LYS-654</scope>
</reference>
<reference key="10">
    <citation type="journal article" date="2011" name="J. Biol. Chem.">
        <title>Characterization of the endonuclease and ATP-dependent flap endo/exonuclease of Dna2.</title>
        <authorList>
            <person name="Fortini B.K."/>
            <person name="Pokharel S."/>
            <person name="Polaczek P."/>
            <person name="Balakrishnan L."/>
            <person name="Bambara R.A."/>
            <person name="Campbell J.L."/>
        </authorList>
    </citation>
    <scope>FUNCTION</scope>
    <scope>DNA-BINDING</scope>
    <scope>MUTAGENESIS OF LYS-654</scope>
</reference>
<reference key="11">
    <citation type="journal article" date="2012" name="J. Biol. Chem.">
        <title>Okazaki fragment processing-independent role for human Dna2 enzyme during DNA replication.</title>
        <authorList>
            <person name="Duxin J.P."/>
            <person name="Moore H.R."/>
            <person name="Sidorova J."/>
            <person name="Karanja K."/>
            <person name="Honaker Y."/>
            <person name="Dao B."/>
            <person name="Piwnica-Worms H."/>
            <person name="Campbell J.L."/>
            <person name="Monnat R.J. Jr."/>
            <person name="Stewart S.A."/>
        </authorList>
    </citation>
    <scope>FUNCTION</scope>
    <scope>DNA-BINDING</scope>
    <scope>INTERACTION WITH WDHD1</scope>
    <scope>MUTAGENESIS OF ASP-277 AND LYS-654</scope>
</reference>
<reference key="12">
    <citation type="journal article" date="2012" name="Nucleic Acids Res.">
        <title>Biochemical analyses indicate that binding and cleavage specificities define the ordered processing of human Okazaki fragments by Dna2 and FEN1.</title>
        <authorList>
            <person name="Gloor J.W."/>
            <person name="Balakrishnan L."/>
            <person name="Campbell J.L."/>
            <person name="Bambara R.A."/>
        </authorList>
    </citation>
    <scope>FUNCTION</scope>
    <scope>DNA-BINDING</scope>
</reference>
<reference key="13">
    <citation type="journal article" date="2014" name="Genome Res.">
        <title>Genomic analysis of primordial dwarfism reveals novel disease genes.</title>
        <authorList>
            <person name="Shaheen R."/>
            <person name="Faqeih E."/>
            <person name="Ansari S."/>
            <person name="Abdel-Salam G."/>
            <person name="Al-Hassnan Z.N."/>
            <person name="Al-Shidi T."/>
            <person name="Alomar R."/>
            <person name="Sogaty S."/>
            <person name="Alkuraya F.S."/>
        </authorList>
    </citation>
    <scope>INVOLVEMENT IN SCKL8</scope>
</reference>
<reference key="14">
    <citation type="journal article" date="2023" name="J. Med. Genet.">
        <title>Biallelic variants in DNA2 cause poikiloderma with congenital cataracts and severe growth failure reminiscent of Rothmund-Thomson syndrome.</title>
        <authorList>
            <person name="Di Lazzaro Filho R."/>
            <person name="Yamamoto G.L."/>
            <person name="Silva T.J."/>
            <person name="Rocha L.A."/>
            <person name="Linnenkamp B.D.W."/>
            <person name="Castro M.A.A."/>
            <person name="Bartholdi D."/>
            <person name="Schaller A."/>
            <person name="Leeb T."/>
            <person name="Kelmann S."/>
            <person name="Utagawa C.Y."/>
            <person name="Steiner C.E."/>
            <person name="Steinmetz L."/>
            <person name="Honjo R.S."/>
            <person name="Kim C.A."/>
            <person name="Wang L."/>
            <person name="Abourjaili-Bilodeau R."/>
            <person name="Campeau P.M."/>
            <person name="Warman M."/>
            <person name="Passos-Bueno M.R."/>
            <person name="Hoch N.C."/>
            <person name="Bertola D.R."/>
        </authorList>
    </citation>
    <scope>INVOLVEMENT IN RTS4</scope>
    <scope>VARIANT RTS4 PRO-48</scope>
</reference>
<reference key="15">
    <citation type="journal article" date="2013" name="Am. J. Hum. Genet.">
        <title>Mutations in DNA2 link progressive myopathy to mitochondrial DNA instability.</title>
        <authorList>
            <person name="Ronchi D."/>
            <person name="Di Fonzo A."/>
            <person name="Lin W."/>
            <person name="Bordoni A."/>
            <person name="Liu C."/>
            <person name="Fassone E."/>
            <person name="Pagliarani S."/>
            <person name="Rizzuti M."/>
            <person name="Zheng L."/>
            <person name="Filosto M."/>
            <person name="Ferro M.T."/>
            <person name="Ranieri M."/>
            <person name="Magri F."/>
            <person name="Peverelli L."/>
            <person name="Li H."/>
            <person name="Yuan Y.C."/>
            <person name="Corti S."/>
            <person name="Sciacco M."/>
            <person name="Moggio M."/>
            <person name="Bresolin N."/>
            <person name="Shen B."/>
            <person name="Comi G.P."/>
        </authorList>
    </citation>
    <scope>VARIANTS PEOA6 HIS-198; GLU-227 AND ILE-637</scope>
    <scope>CHARACTERIZATION OF VARIANTS PEOA6 HHIS-198; GLU-227 AND ILE-637</scope>
</reference>
<reference key="16">
    <citation type="journal article" date="2019" name="Ann. Clin. Transl. Neurol.">
        <title>Novel mutations in DNA2 associated with myopathy and mtDNA instability.</title>
        <authorList>
            <person name="Ronchi D."/>
            <person name="Liu C."/>
            <person name="Caporali L."/>
            <person name="Piga D."/>
            <person name="Li H."/>
            <person name="Tagliavini F."/>
            <person name="Valentino M.L."/>
            <person name="Ferro M.T."/>
            <person name="Bini P."/>
            <person name="Zheng L."/>
            <person name="Carelli V."/>
            <person name="Shen B."/>
            <person name="Comi G.P."/>
        </authorList>
    </citation>
    <scope>VARIANTS PEOA6 GLY-221; LEU-552; LEU-640 AND HIS-956</scope>
    <scope>CHARACTERIZATION OF VARIANTS PEOA6 GLY-221; LEU-552; LEU-640 AND HIS-956</scope>
    <scope>FUNCTION</scope>
</reference>
<reference key="17">
    <citation type="journal article" date="2019" name="Hum. Mutat.">
        <title>Biallelic variants in DNA2 cause microcephalic primordial dwarfism.</title>
        <authorList>
            <person name="Tarnauskaite Z."/>
            <person name="Bicknell L.S."/>
            <person name="Marsh J.A."/>
            <person name="Murray J.E."/>
            <person name="Parry D.A."/>
            <person name="Logan C.V."/>
            <person name="Bober M.B."/>
            <person name="de Silva D.C."/>
            <person name="Duker A.L."/>
            <person name="Sillence D."/>
            <person name="Wise C."/>
            <person name="Jackson A.P."/>
            <person name="Murina O."/>
            <person name="Reijns M.A.M."/>
        </authorList>
    </citation>
    <scope>VARIANT SCKL8 ALA-655</scope>
</reference>
<keyword id="KW-0002">3D-structure</keyword>
<keyword id="KW-0004">4Fe-4S</keyword>
<keyword id="KW-0007">Acetylation</keyword>
<keyword id="KW-0025">Alternative splicing</keyword>
<keyword id="KW-0067">ATP-binding</keyword>
<keyword id="KW-0225">Disease variant</keyword>
<keyword id="KW-0227">DNA damage</keyword>
<keyword id="KW-0234">DNA repair</keyword>
<keyword id="KW-0235">DNA replication</keyword>
<keyword id="KW-0238">DNA-binding</keyword>
<keyword id="KW-0242">Dwarfism</keyword>
<keyword id="KW-0038">Ectodermal dysplasia</keyword>
<keyword id="KW-0255">Endonuclease</keyword>
<keyword id="KW-0347">Helicase</keyword>
<keyword id="KW-0378">Hydrolase</keyword>
<keyword id="KW-1063">Hypotrichosis</keyword>
<keyword id="KW-0991">Intellectual disability</keyword>
<keyword id="KW-0408">Iron</keyword>
<keyword id="KW-0411">Iron-sulfur</keyword>
<keyword id="KW-0479">Metal-binding</keyword>
<keyword id="KW-0496">Mitochondrion</keyword>
<keyword id="KW-0511">Multifunctional enzyme</keyword>
<keyword id="KW-0540">Nuclease</keyword>
<keyword id="KW-0547">Nucleotide-binding</keyword>
<keyword id="KW-0539">Nucleus</keyword>
<keyword id="KW-1274">Primary mitochondrial disease</keyword>
<keyword id="KW-0935">Progressive external ophthalmoplegia</keyword>
<keyword id="KW-1267">Proteomics identification</keyword>
<keyword id="KW-1185">Reference proteome</keyword>
<feature type="chain" id="PRO_0000080712" description="DNA replication ATP-dependent helicase/nuclease DNA2">
    <location>
        <begin position="1"/>
        <end position="1060"/>
    </location>
</feature>
<feature type="region of interest" description="Nuclease activity" evidence="1">
    <location>
        <begin position="81"/>
        <end position="519"/>
    </location>
</feature>
<feature type="region of interest" description="Helicase activity" evidence="1">
    <location>
        <begin position="520"/>
        <end position="1060"/>
    </location>
</feature>
<feature type="binding site" evidence="1">
    <location>
        <position position="136"/>
    </location>
    <ligand>
        <name>[4Fe-4S] cluster</name>
        <dbReference type="ChEBI" id="CHEBI:49883"/>
    </ligand>
</feature>
<feature type="binding site" evidence="1">
    <location>
        <position position="393"/>
    </location>
    <ligand>
        <name>[4Fe-4S] cluster</name>
        <dbReference type="ChEBI" id="CHEBI:49883"/>
    </ligand>
</feature>
<feature type="binding site" evidence="1">
    <location>
        <position position="396"/>
    </location>
    <ligand>
        <name>[4Fe-4S] cluster</name>
        <dbReference type="ChEBI" id="CHEBI:49883"/>
    </ligand>
</feature>
<feature type="binding site" evidence="1">
    <location>
        <position position="402"/>
    </location>
    <ligand>
        <name>[4Fe-4S] cluster</name>
        <dbReference type="ChEBI" id="CHEBI:49883"/>
    </ligand>
</feature>
<feature type="binding site" evidence="2">
    <location>
        <begin position="648"/>
        <end position="655"/>
    </location>
    <ligand>
        <name>ATP</name>
        <dbReference type="ChEBI" id="CHEBI:30616"/>
    </ligand>
</feature>
<feature type="splice variant" id="VSP_021869" description="In isoform 3." evidence="17">
    <location>
        <begin position="663"/>
        <end position="900"/>
    </location>
</feature>
<feature type="splice variant" id="VSP_021870" description="In isoform 2." evidence="17">
    <original>ILYACGFSVLLTSYTHSAVDNILL</original>
    <variation>FRRFIQLSSNLQSKKFADQSPLNP</variation>
    <location>
        <begin position="664"/>
        <end position="687"/>
    </location>
</feature>
<feature type="splice variant" id="VSP_021871" description="In isoform 2." evidence="17">
    <location>
        <begin position="688"/>
        <end position="1060"/>
    </location>
</feature>
<feature type="splice variant" id="VSP_044185" description="In isoform 4." evidence="17">
    <original>IDLPSREHESLCHILGDFQRE</original>
    <variation>SFFFCIWSHLIAL</variation>
    <location>
        <begin position="1040"/>
        <end position="1060"/>
    </location>
</feature>
<feature type="sequence variant" id="VAR_089691" description="In RTS4; likely pathogenic." evidence="16">
    <original>L</original>
    <variation>P</variation>
    <location>
        <position position="48"/>
    </location>
</feature>
<feature type="sequence variant" id="VAR_069905" description="In PEOA6; uncertain significance; the mutant protein has a complete loss of nuclease activity and severely impaired helicase activity; dbSNP:rs1272393477." evidence="12">
    <original>R</original>
    <variation>H</variation>
    <location>
        <position position="198"/>
    </location>
</feature>
<feature type="sequence variant" id="VAR_089692" description="In PEOA6; uncertain significance; modestly decreased of both ATP hydrolysis activity and nuclease activity; dbSNP:rs751031650." evidence="15">
    <original>A</original>
    <variation>G</variation>
    <location>
        <position position="221"/>
    </location>
</feature>
<feature type="sequence variant" id="VAR_069906" description="In PEOA6; uncertain significance; the mutant protein has significantly reduced nuclease and helicase activity; consistent with a loss of function mutation; dbSNP:rs760412883." evidence="12">
    <original>K</original>
    <variation>E</variation>
    <location>
        <position position="227"/>
    </location>
</feature>
<feature type="sequence variant" id="VAR_089693" description="In PEOA6; uncertain significance; decreased both ATP hydrolysis activity and nuclease activity; dbSNP:rs910368080." evidence="15">
    <original>S</original>
    <variation>L</variation>
    <location>
        <position position="552"/>
    </location>
</feature>
<feature type="sequence variant" id="VAR_069907" description="In PEOA6; uncertain significance; the mutant protein has decreased nuclease activity (30% of wild-type) and enhanced helicase activity; consistent with a loss of function mutation; dbSNP:rs746522359." evidence="12">
    <original>V</original>
    <variation>I</variation>
    <location>
        <position position="637"/>
    </location>
</feature>
<feature type="sequence variant" id="VAR_089694" description="In PEOA6; likely pathogenic; abolished both ATP hydrolysis activity and nuclease activity; dbSNP:rs1590054876." evidence="15">
    <original>S</original>
    <variation>L</variation>
    <location>
        <position position="640"/>
    </location>
</feature>
<feature type="sequence variant" id="VAR_089695" description="In SCKL8; likely pathogenic." evidence="14">
    <original>T</original>
    <variation>A</variation>
    <location>
        <position position="655"/>
    </location>
</feature>
<feature type="sequence variant" id="VAR_089696" description="In PEOA6; uncertain significance; no effect on both ATP hydrolysis activity and nuclease activity; dbSNP:rs747301191." evidence="15">
    <original>R</original>
    <variation>H</variation>
    <location>
        <position position="956"/>
    </location>
</feature>
<feature type="mutagenesis site" description="Abolishes ability to resect DNA in present of BLM." evidence="4 8 11">
    <original>D</original>
    <variation>A</variation>
    <location>
        <position position="277"/>
    </location>
</feature>
<feature type="mutagenesis site" description="Abolishes ability to unwind DNA, while it does not affect ability to resect DNA." evidence="4 8 9 11">
    <original>K</original>
    <variation>E</variation>
    <location>
        <position position="654"/>
    </location>
</feature>
<feature type="sequence conflict" description="In Ref. 3; AAH28188." evidence="18" ref="3">
    <original>K</original>
    <variation>N</variation>
    <location>
        <position position="986"/>
    </location>
</feature>
<feature type="helix" evidence="19">
    <location>
        <begin position="7"/>
        <end position="10"/>
    </location>
</feature>
<organism>
    <name type="scientific">Homo sapiens</name>
    <name type="common">Human</name>
    <dbReference type="NCBI Taxonomy" id="9606"/>
    <lineage>
        <taxon>Eukaryota</taxon>
        <taxon>Metazoa</taxon>
        <taxon>Chordata</taxon>
        <taxon>Craniata</taxon>
        <taxon>Vertebrata</taxon>
        <taxon>Euteleostomi</taxon>
        <taxon>Mammalia</taxon>
        <taxon>Eutheria</taxon>
        <taxon>Euarchontoglires</taxon>
        <taxon>Primates</taxon>
        <taxon>Haplorrhini</taxon>
        <taxon>Catarrhini</taxon>
        <taxon>Hominidae</taxon>
        <taxon>Homo</taxon>
    </lineage>
</organism>
<protein>
    <recommendedName>
        <fullName>DNA replication ATP-dependent helicase/nuclease DNA2</fullName>
        <shortName>hDNA2</shortName>
    </recommendedName>
    <alternativeName>
        <fullName>DNA replication ATP-dependent helicase-like homolog</fullName>
    </alternativeName>
    <domain>
        <recommendedName>
            <fullName>DNA replication nuclease DNA2</fullName>
            <ecNumber>3.1.-.-</ecNumber>
        </recommendedName>
    </domain>
    <domain>
        <recommendedName>
            <fullName>DNA replication ATP-dependent helicase DNA2</fullName>
            <ecNumber>3.6.4.12</ecNumber>
        </recommendedName>
    </domain>
</protein>